<evidence type="ECO:0000250" key="1"/>
<evidence type="ECO:0000255" key="2">
    <source>
        <dbReference type="HAMAP-Rule" id="MF_00100"/>
    </source>
</evidence>
<evidence type="ECO:0000256" key="3">
    <source>
        <dbReference type="SAM" id="MobiDB-lite"/>
    </source>
</evidence>
<dbReference type="EMBL" id="CP000527">
    <property type="protein sequence ID" value="ABM29449.1"/>
    <property type="molecule type" value="Genomic_DNA"/>
</dbReference>
<dbReference type="RefSeq" id="WP_011792849.1">
    <property type="nucleotide sequence ID" value="NC_008751.1"/>
</dbReference>
<dbReference type="SMR" id="A1VG83"/>
<dbReference type="KEGG" id="dvl:Dvul_2433"/>
<dbReference type="HOGENOM" id="CLU_006301_9_3_7"/>
<dbReference type="Proteomes" id="UP000009173">
    <property type="component" value="Chromosome"/>
</dbReference>
<dbReference type="GO" id="GO:0005829">
    <property type="term" value="C:cytosol"/>
    <property type="evidence" value="ECO:0007669"/>
    <property type="project" value="TreeGrafter"/>
</dbReference>
<dbReference type="GO" id="GO:0005525">
    <property type="term" value="F:GTP binding"/>
    <property type="evidence" value="ECO:0007669"/>
    <property type="project" value="UniProtKB-KW"/>
</dbReference>
<dbReference type="GO" id="GO:0003924">
    <property type="term" value="F:GTPase activity"/>
    <property type="evidence" value="ECO:0007669"/>
    <property type="project" value="UniProtKB-UniRule"/>
</dbReference>
<dbReference type="GO" id="GO:0003743">
    <property type="term" value="F:translation initiation factor activity"/>
    <property type="evidence" value="ECO:0007669"/>
    <property type="project" value="UniProtKB-UniRule"/>
</dbReference>
<dbReference type="CDD" id="cd01887">
    <property type="entry name" value="IF2_eIF5B"/>
    <property type="match status" value="1"/>
</dbReference>
<dbReference type="CDD" id="cd03702">
    <property type="entry name" value="IF2_mtIF2_II"/>
    <property type="match status" value="1"/>
</dbReference>
<dbReference type="CDD" id="cd03692">
    <property type="entry name" value="mtIF2_IVc"/>
    <property type="match status" value="1"/>
</dbReference>
<dbReference type="FunFam" id="2.40.30.10:FF:000007">
    <property type="entry name" value="Translation initiation factor IF-2"/>
    <property type="match status" value="1"/>
</dbReference>
<dbReference type="FunFam" id="2.40.30.10:FF:000008">
    <property type="entry name" value="Translation initiation factor IF-2"/>
    <property type="match status" value="1"/>
</dbReference>
<dbReference type="FunFam" id="3.40.50.10050:FF:000001">
    <property type="entry name" value="Translation initiation factor IF-2"/>
    <property type="match status" value="1"/>
</dbReference>
<dbReference type="FunFam" id="3.40.50.300:FF:000019">
    <property type="entry name" value="Translation initiation factor IF-2"/>
    <property type="match status" value="1"/>
</dbReference>
<dbReference type="Gene3D" id="1.10.10.2480">
    <property type="match status" value="1"/>
</dbReference>
<dbReference type="Gene3D" id="3.40.50.300">
    <property type="entry name" value="P-loop containing nucleotide triphosphate hydrolases"/>
    <property type="match status" value="1"/>
</dbReference>
<dbReference type="Gene3D" id="2.40.30.10">
    <property type="entry name" value="Translation factors"/>
    <property type="match status" value="2"/>
</dbReference>
<dbReference type="Gene3D" id="3.40.50.10050">
    <property type="entry name" value="Translation initiation factor IF- 2, domain 3"/>
    <property type="match status" value="1"/>
</dbReference>
<dbReference type="HAMAP" id="MF_00100_B">
    <property type="entry name" value="IF_2_B"/>
    <property type="match status" value="1"/>
</dbReference>
<dbReference type="InterPro" id="IPR053905">
    <property type="entry name" value="EF-G-like_DII"/>
</dbReference>
<dbReference type="InterPro" id="IPR004161">
    <property type="entry name" value="EFTu-like_2"/>
</dbReference>
<dbReference type="InterPro" id="IPR044145">
    <property type="entry name" value="IF2_II"/>
</dbReference>
<dbReference type="InterPro" id="IPR006847">
    <property type="entry name" value="IF2_N"/>
</dbReference>
<dbReference type="InterPro" id="IPR027417">
    <property type="entry name" value="P-loop_NTPase"/>
</dbReference>
<dbReference type="InterPro" id="IPR005225">
    <property type="entry name" value="Small_GTP-bd"/>
</dbReference>
<dbReference type="InterPro" id="IPR000795">
    <property type="entry name" value="T_Tr_GTP-bd_dom"/>
</dbReference>
<dbReference type="InterPro" id="IPR000178">
    <property type="entry name" value="TF_IF2_bacterial-like"/>
</dbReference>
<dbReference type="InterPro" id="IPR015760">
    <property type="entry name" value="TIF_IF2"/>
</dbReference>
<dbReference type="InterPro" id="IPR023115">
    <property type="entry name" value="TIF_IF2_dom3"/>
</dbReference>
<dbReference type="InterPro" id="IPR036925">
    <property type="entry name" value="TIF_IF2_dom3_sf"/>
</dbReference>
<dbReference type="InterPro" id="IPR009000">
    <property type="entry name" value="Transl_B-barrel_sf"/>
</dbReference>
<dbReference type="NCBIfam" id="TIGR00487">
    <property type="entry name" value="IF-2"/>
    <property type="match status" value="1"/>
</dbReference>
<dbReference type="NCBIfam" id="TIGR00231">
    <property type="entry name" value="small_GTP"/>
    <property type="match status" value="1"/>
</dbReference>
<dbReference type="PANTHER" id="PTHR43381:SF5">
    <property type="entry name" value="TR-TYPE G DOMAIN-CONTAINING PROTEIN"/>
    <property type="match status" value="1"/>
</dbReference>
<dbReference type="PANTHER" id="PTHR43381">
    <property type="entry name" value="TRANSLATION INITIATION FACTOR IF-2-RELATED"/>
    <property type="match status" value="1"/>
</dbReference>
<dbReference type="Pfam" id="PF22042">
    <property type="entry name" value="EF-G_D2"/>
    <property type="match status" value="1"/>
</dbReference>
<dbReference type="Pfam" id="PF00009">
    <property type="entry name" value="GTP_EFTU"/>
    <property type="match status" value="1"/>
</dbReference>
<dbReference type="Pfam" id="PF03144">
    <property type="entry name" value="GTP_EFTU_D2"/>
    <property type="match status" value="1"/>
</dbReference>
<dbReference type="Pfam" id="PF11987">
    <property type="entry name" value="IF-2"/>
    <property type="match status" value="1"/>
</dbReference>
<dbReference type="Pfam" id="PF04760">
    <property type="entry name" value="IF2_N"/>
    <property type="match status" value="1"/>
</dbReference>
<dbReference type="SUPFAM" id="SSF52156">
    <property type="entry name" value="Initiation factor IF2/eIF5b, domain 3"/>
    <property type="match status" value="1"/>
</dbReference>
<dbReference type="SUPFAM" id="SSF52540">
    <property type="entry name" value="P-loop containing nucleoside triphosphate hydrolases"/>
    <property type="match status" value="1"/>
</dbReference>
<dbReference type="SUPFAM" id="SSF50447">
    <property type="entry name" value="Translation proteins"/>
    <property type="match status" value="2"/>
</dbReference>
<dbReference type="PROSITE" id="PS51722">
    <property type="entry name" value="G_TR_2"/>
    <property type="match status" value="1"/>
</dbReference>
<dbReference type="PROSITE" id="PS01176">
    <property type="entry name" value="IF2"/>
    <property type="match status" value="1"/>
</dbReference>
<keyword id="KW-0963">Cytoplasm</keyword>
<keyword id="KW-0342">GTP-binding</keyword>
<keyword id="KW-0396">Initiation factor</keyword>
<keyword id="KW-0547">Nucleotide-binding</keyword>
<keyword id="KW-0648">Protein biosynthesis</keyword>
<name>IF2_NITV4</name>
<accession>A1VG83</accession>
<reference key="1">
    <citation type="journal article" date="2009" name="Environ. Microbiol.">
        <title>Contribution of mobile genetic elements to Desulfovibrio vulgaris genome plasticity.</title>
        <authorList>
            <person name="Walker C.B."/>
            <person name="Stolyar S."/>
            <person name="Chivian D."/>
            <person name="Pinel N."/>
            <person name="Gabster J.A."/>
            <person name="Dehal P.S."/>
            <person name="He Z."/>
            <person name="Yang Z.K."/>
            <person name="Yen H.C."/>
            <person name="Zhou J."/>
            <person name="Wall J.D."/>
            <person name="Hazen T.C."/>
            <person name="Arkin A.P."/>
            <person name="Stahl D.A."/>
        </authorList>
    </citation>
    <scope>NUCLEOTIDE SEQUENCE [LARGE SCALE GENOMIC DNA]</scope>
    <source>
        <strain>DP4</strain>
    </source>
</reference>
<comment type="function">
    <text evidence="2">One of the essential components for the initiation of protein synthesis. Protects formylmethionyl-tRNA from spontaneous hydrolysis and promotes its binding to the 30S ribosomal subunits. Also involved in the hydrolysis of GTP during the formation of the 70S ribosomal complex.</text>
</comment>
<comment type="subcellular location">
    <subcellularLocation>
        <location evidence="2">Cytoplasm</location>
    </subcellularLocation>
</comment>
<comment type="similarity">
    <text evidence="2">Belongs to the TRAFAC class translation factor GTPase superfamily. Classic translation factor GTPase family. IF-2 subfamily.</text>
</comment>
<feature type="chain" id="PRO_1000008237" description="Translation initiation factor IF-2">
    <location>
        <begin position="1"/>
        <end position="1079"/>
    </location>
</feature>
<feature type="domain" description="tr-type G">
    <location>
        <begin position="578"/>
        <end position="745"/>
    </location>
</feature>
<feature type="region of interest" description="Disordered" evidence="3">
    <location>
        <begin position="52"/>
        <end position="488"/>
    </location>
</feature>
<feature type="region of interest" description="G1" evidence="1">
    <location>
        <begin position="587"/>
        <end position="594"/>
    </location>
</feature>
<feature type="region of interest" description="G2" evidence="1">
    <location>
        <begin position="612"/>
        <end position="616"/>
    </location>
</feature>
<feature type="region of interest" description="G3" evidence="1">
    <location>
        <begin position="633"/>
        <end position="636"/>
    </location>
</feature>
<feature type="region of interest" description="G4" evidence="1">
    <location>
        <begin position="687"/>
        <end position="690"/>
    </location>
</feature>
<feature type="region of interest" description="G5" evidence="1">
    <location>
        <begin position="723"/>
        <end position="725"/>
    </location>
</feature>
<feature type="compositionally biased region" description="Basic and acidic residues" evidence="3">
    <location>
        <begin position="52"/>
        <end position="65"/>
    </location>
</feature>
<feature type="compositionally biased region" description="Basic and acidic residues" evidence="3">
    <location>
        <begin position="75"/>
        <end position="90"/>
    </location>
</feature>
<feature type="compositionally biased region" description="Basic and acidic residues" evidence="3">
    <location>
        <begin position="102"/>
        <end position="134"/>
    </location>
</feature>
<feature type="compositionally biased region" description="Low complexity" evidence="3">
    <location>
        <begin position="150"/>
        <end position="184"/>
    </location>
</feature>
<feature type="compositionally biased region" description="Basic and acidic residues" evidence="3">
    <location>
        <begin position="185"/>
        <end position="194"/>
    </location>
</feature>
<feature type="compositionally biased region" description="Low complexity" evidence="3">
    <location>
        <begin position="276"/>
        <end position="291"/>
    </location>
</feature>
<feature type="compositionally biased region" description="Basic and acidic residues" evidence="3">
    <location>
        <begin position="306"/>
        <end position="327"/>
    </location>
</feature>
<feature type="compositionally biased region" description="Low complexity" evidence="3">
    <location>
        <begin position="348"/>
        <end position="370"/>
    </location>
</feature>
<feature type="compositionally biased region" description="Low complexity" evidence="3">
    <location>
        <begin position="380"/>
        <end position="398"/>
    </location>
</feature>
<feature type="compositionally biased region" description="Gly residues" evidence="3">
    <location>
        <begin position="419"/>
        <end position="429"/>
    </location>
</feature>
<feature type="compositionally biased region" description="Basic and acidic residues" evidence="3">
    <location>
        <begin position="461"/>
        <end position="471"/>
    </location>
</feature>
<feature type="compositionally biased region" description="Basic residues" evidence="3">
    <location>
        <begin position="473"/>
        <end position="482"/>
    </location>
</feature>
<feature type="binding site" evidence="2">
    <location>
        <begin position="587"/>
        <end position="594"/>
    </location>
    <ligand>
        <name>GTP</name>
        <dbReference type="ChEBI" id="CHEBI:37565"/>
    </ligand>
</feature>
<feature type="binding site" evidence="2">
    <location>
        <begin position="633"/>
        <end position="637"/>
    </location>
    <ligand>
        <name>GTP</name>
        <dbReference type="ChEBI" id="CHEBI:37565"/>
    </ligand>
</feature>
<feature type="binding site" evidence="2">
    <location>
        <begin position="687"/>
        <end position="690"/>
    </location>
    <ligand>
        <name>GTP</name>
        <dbReference type="ChEBI" id="CHEBI:37565"/>
    </ligand>
</feature>
<protein>
    <recommendedName>
        <fullName evidence="2">Translation initiation factor IF-2</fullName>
    </recommendedName>
</protein>
<gene>
    <name evidence="2" type="primary">infB</name>
    <name type="ordered locus">Dvul_2433</name>
</gene>
<organism>
    <name type="scientific">Nitratidesulfovibrio vulgaris (strain DP4)</name>
    <name type="common">Desulfovibrio vulgaris</name>
    <dbReference type="NCBI Taxonomy" id="391774"/>
    <lineage>
        <taxon>Bacteria</taxon>
        <taxon>Pseudomonadati</taxon>
        <taxon>Thermodesulfobacteriota</taxon>
        <taxon>Desulfovibrionia</taxon>
        <taxon>Desulfovibrionales</taxon>
        <taxon>Desulfovibrionaceae</taxon>
        <taxon>Nitratidesulfovibrio</taxon>
    </lineage>
</organism>
<sequence length="1079" mass="115420">MTENKTKVKDLAAELGVTTKELGQVLKDMNISAKTSTSVIAQEDLPRIKERVQAQRDGGARKEGNPDVIVRRRHRDGDRASARAEAKAPEQEATAAMPETSAPERAEEADKPAVAKPAKAPETEAHARARKEPQAEPVKARIIRRPDEPAPVAKVVEAAPAETPAPEAPAVKATVTAEAAPAKTVEPESERPQADKPATARVVRPATPDASAVPDGTSSAPTLPVRSAEPSDTVERADADADGDDDDAQQRRRKKKRRQPEAVVPQVRVISRPDPAAVAQQQMQQQAAQQQREAGGYRPGGQRPEGGYRPEGQREGGYRPEGQREGGYRPGGAPRPEGGYRPGGPRPEGGYRPGAPRPEGGYRPAGGPRPEGQREGGYRPGAPRPEGGYRPAGGAPRPEGQREGGYRPAGGPPRPGGAPRPGGFGGAPGGMPVPGADGRGDQSKKKRQKGRRTVDFQADGPRGRSDDDVMRGPRGRGKRGKKDVRPAATQPLKAIKRKIKVDEAIRVADMAHQMGLKANEIIKVLFGLGVMATINQSLDIDTATVVAGEFGYEVEKVGFSEDDYLVPKEEDAPETLVTRPPVVTIMGHVDHGKTSLLDAIRKSNVTAGEAGGITQHIGAYHVTTKKGEIVFLDTPGHEAFTAMRARGAQITDLVVLVVAADDGVMEQTREAVNHSKAAGVPIMVAVNKMDKEGANPDRVIRELSELGLVAEDWGGDTIFAKVSAKTREGLDELLELIAIQAEILELKANPDKAARGHVVEAKLDKGRGPLATVLVQEGTLRQGDAFVCGVFAGRVRAMFDDQGRKVKEAGPSTPVEVQGFDGVVEAGEEFVSVADDKVARRIAESRAVKQRERELAKESKVTLETFLSRRADAAEALTLNLVLKADVQGTLEAISEAVRKLSTEKVKINIIHGGAGAITESDILLASASDAIIIGFNVRPTSKVKDIAEQENVDIRFYDIIYKLVDEIKSAMAGMLAPVQREVYLGQAEVRETFSVPKIGVIAGCHVADGKVTRNAGVRLLRDGVVVYTGKITSLKRFKDDVRDVQKGYECGMGLENFNDIKVGDVIEAFEMVEEAATL</sequence>
<proteinExistence type="inferred from homology"/>